<reference key="1">
    <citation type="submission" date="2004-09" db="EMBL/GenBank/DDBJ databases">
        <title>ENC2 a member of the BTB/POZ KELCH protein family.</title>
        <authorList>
            <person name="Corcoran M.M."/>
        </authorList>
    </citation>
    <scope>NUCLEOTIDE SEQUENCE [MRNA]</scope>
</reference>
<reference key="2">
    <citation type="journal article" date="2001" name="Genome Res.">
        <title>Towards a catalog of human genes and proteins: sequencing and analysis of 500 novel complete protein coding human cDNAs.</title>
        <authorList>
            <person name="Wiemann S."/>
            <person name="Weil B."/>
            <person name="Wellenreuther R."/>
            <person name="Gassenhuber J."/>
            <person name="Glassl S."/>
            <person name="Ansorge W."/>
            <person name="Boecher M."/>
            <person name="Bloecker H."/>
            <person name="Bauersachs S."/>
            <person name="Blum H."/>
            <person name="Lauber J."/>
            <person name="Duesterhoeft A."/>
            <person name="Beyer A."/>
            <person name="Koehrer K."/>
            <person name="Strack N."/>
            <person name="Mewes H.-W."/>
            <person name="Ottenwaelder B."/>
            <person name="Obermaier B."/>
            <person name="Tampe J."/>
            <person name="Heubner D."/>
            <person name="Wambutt R."/>
            <person name="Korn B."/>
            <person name="Klein M."/>
            <person name="Poustka A."/>
        </authorList>
    </citation>
    <scope>NUCLEOTIDE SEQUENCE [LARGE SCALE MRNA]</scope>
    <source>
        <tissue>Testis</tissue>
    </source>
</reference>
<reference key="3">
    <citation type="journal article" date="2004" name="Nat. Genet.">
        <title>Complete sequencing and characterization of 21,243 full-length human cDNAs.</title>
        <authorList>
            <person name="Ota T."/>
            <person name="Suzuki Y."/>
            <person name="Nishikawa T."/>
            <person name="Otsuki T."/>
            <person name="Sugiyama T."/>
            <person name="Irie R."/>
            <person name="Wakamatsu A."/>
            <person name="Hayashi K."/>
            <person name="Sato H."/>
            <person name="Nagai K."/>
            <person name="Kimura K."/>
            <person name="Makita H."/>
            <person name="Sekine M."/>
            <person name="Obayashi M."/>
            <person name="Nishi T."/>
            <person name="Shibahara T."/>
            <person name="Tanaka T."/>
            <person name="Ishii S."/>
            <person name="Yamamoto J."/>
            <person name="Saito K."/>
            <person name="Kawai Y."/>
            <person name="Isono Y."/>
            <person name="Nakamura Y."/>
            <person name="Nagahari K."/>
            <person name="Murakami K."/>
            <person name="Yasuda T."/>
            <person name="Iwayanagi T."/>
            <person name="Wagatsuma M."/>
            <person name="Shiratori A."/>
            <person name="Sudo H."/>
            <person name="Hosoiri T."/>
            <person name="Kaku Y."/>
            <person name="Kodaira H."/>
            <person name="Kondo H."/>
            <person name="Sugawara M."/>
            <person name="Takahashi M."/>
            <person name="Kanda K."/>
            <person name="Yokoi T."/>
            <person name="Furuya T."/>
            <person name="Kikkawa E."/>
            <person name="Omura Y."/>
            <person name="Abe K."/>
            <person name="Kamihara K."/>
            <person name="Katsuta N."/>
            <person name="Sato K."/>
            <person name="Tanikawa M."/>
            <person name="Yamazaki M."/>
            <person name="Ninomiya K."/>
            <person name="Ishibashi T."/>
            <person name="Yamashita H."/>
            <person name="Murakawa K."/>
            <person name="Fujimori K."/>
            <person name="Tanai H."/>
            <person name="Kimata M."/>
            <person name="Watanabe M."/>
            <person name="Hiraoka S."/>
            <person name="Chiba Y."/>
            <person name="Ishida S."/>
            <person name="Ono Y."/>
            <person name="Takiguchi S."/>
            <person name="Watanabe S."/>
            <person name="Yosida M."/>
            <person name="Hotuta T."/>
            <person name="Kusano J."/>
            <person name="Kanehori K."/>
            <person name="Takahashi-Fujii A."/>
            <person name="Hara H."/>
            <person name="Tanase T.-O."/>
            <person name="Nomura Y."/>
            <person name="Togiya S."/>
            <person name="Komai F."/>
            <person name="Hara R."/>
            <person name="Takeuchi K."/>
            <person name="Arita M."/>
            <person name="Imose N."/>
            <person name="Musashino K."/>
            <person name="Yuuki H."/>
            <person name="Oshima A."/>
            <person name="Sasaki N."/>
            <person name="Aotsuka S."/>
            <person name="Yoshikawa Y."/>
            <person name="Matsunawa H."/>
            <person name="Ichihara T."/>
            <person name="Shiohata N."/>
            <person name="Sano S."/>
            <person name="Moriya S."/>
            <person name="Momiyama H."/>
            <person name="Satoh N."/>
            <person name="Takami S."/>
            <person name="Terashima Y."/>
            <person name="Suzuki O."/>
            <person name="Nakagawa S."/>
            <person name="Senoh A."/>
            <person name="Mizoguchi H."/>
            <person name="Goto Y."/>
            <person name="Shimizu F."/>
            <person name="Wakebe H."/>
            <person name="Hishigaki H."/>
            <person name="Watanabe T."/>
            <person name="Sugiyama A."/>
            <person name="Takemoto M."/>
            <person name="Kawakami B."/>
            <person name="Yamazaki M."/>
            <person name="Watanabe K."/>
            <person name="Kumagai A."/>
            <person name="Itakura S."/>
            <person name="Fukuzumi Y."/>
            <person name="Fujimori Y."/>
            <person name="Komiyama M."/>
            <person name="Tashiro H."/>
            <person name="Tanigami A."/>
            <person name="Fujiwara T."/>
            <person name="Ono T."/>
            <person name="Yamada K."/>
            <person name="Fujii Y."/>
            <person name="Ozaki K."/>
            <person name="Hirao M."/>
            <person name="Ohmori Y."/>
            <person name="Kawabata A."/>
            <person name="Hikiji T."/>
            <person name="Kobatake N."/>
            <person name="Inagaki H."/>
            <person name="Ikema Y."/>
            <person name="Okamoto S."/>
            <person name="Okitani R."/>
            <person name="Kawakami T."/>
            <person name="Noguchi S."/>
            <person name="Itoh T."/>
            <person name="Shigeta K."/>
            <person name="Senba T."/>
            <person name="Matsumura K."/>
            <person name="Nakajima Y."/>
            <person name="Mizuno T."/>
            <person name="Morinaga M."/>
            <person name="Sasaki M."/>
            <person name="Togashi T."/>
            <person name="Oyama M."/>
            <person name="Hata H."/>
            <person name="Watanabe M."/>
            <person name="Komatsu T."/>
            <person name="Mizushima-Sugano J."/>
            <person name="Satoh T."/>
            <person name="Shirai Y."/>
            <person name="Takahashi Y."/>
            <person name="Nakagawa K."/>
            <person name="Okumura K."/>
            <person name="Nagase T."/>
            <person name="Nomura N."/>
            <person name="Kikuchi H."/>
            <person name="Masuho Y."/>
            <person name="Yamashita R."/>
            <person name="Nakai K."/>
            <person name="Yada T."/>
            <person name="Nakamura Y."/>
            <person name="Ohara O."/>
            <person name="Isogai T."/>
            <person name="Sugano S."/>
        </authorList>
    </citation>
    <scope>NUCLEOTIDE SEQUENCE [LARGE SCALE MRNA]</scope>
    <scope>VARIANT ILE-250</scope>
    <source>
        <tissue>Placenta</tissue>
    </source>
</reference>
<reference key="4">
    <citation type="journal article" date="2006" name="Nature">
        <title>Analysis of the DNA sequence and duplication history of human chromosome 15.</title>
        <authorList>
            <person name="Zody M.C."/>
            <person name="Garber M."/>
            <person name="Sharpe T."/>
            <person name="Young S.K."/>
            <person name="Rowen L."/>
            <person name="O'Neill K."/>
            <person name="Whittaker C.A."/>
            <person name="Kamal M."/>
            <person name="Chang J.L."/>
            <person name="Cuomo C.A."/>
            <person name="Dewar K."/>
            <person name="FitzGerald M.G."/>
            <person name="Kodira C.D."/>
            <person name="Madan A."/>
            <person name="Qin S."/>
            <person name="Yang X."/>
            <person name="Abbasi N."/>
            <person name="Abouelleil A."/>
            <person name="Arachchi H.M."/>
            <person name="Baradarani L."/>
            <person name="Birditt B."/>
            <person name="Bloom S."/>
            <person name="Bloom T."/>
            <person name="Borowsky M.L."/>
            <person name="Burke J."/>
            <person name="Butler J."/>
            <person name="Cook A."/>
            <person name="DeArellano K."/>
            <person name="DeCaprio D."/>
            <person name="Dorris L. III"/>
            <person name="Dors M."/>
            <person name="Eichler E.E."/>
            <person name="Engels R."/>
            <person name="Fahey J."/>
            <person name="Fleetwood P."/>
            <person name="Friedman C."/>
            <person name="Gearin G."/>
            <person name="Hall J.L."/>
            <person name="Hensley G."/>
            <person name="Johnson E."/>
            <person name="Jones C."/>
            <person name="Kamat A."/>
            <person name="Kaur A."/>
            <person name="Locke D.P."/>
            <person name="Madan A."/>
            <person name="Munson G."/>
            <person name="Jaffe D.B."/>
            <person name="Lui A."/>
            <person name="Macdonald P."/>
            <person name="Mauceli E."/>
            <person name="Naylor J.W."/>
            <person name="Nesbitt R."/>
            <person name="Nicol R."/>
            <person name="O'Leary S.B."/>
            <person name="Ratcliffe A."/>
            <person name="Rounsley S."/>
            <person name="She X."/>
            <person name="Sneddon K.M.B."/>
            <person name="Stewart S."/>
            <person name="Sougnez C."/>
            <person name="Stone S.M."/>
            <person name="Topham K."/>
            <person name="Vincent D."/>
            <person name="Wang S."/>
            <person name="Zimmer A.R."/>
            <person name="Birren B.W."/>
            <person name="Hood L."/>
            <person name="Lander E.S."/>
            <person name="Nusbaum C."/>
        </authorList>
    </citation>
    <scope>NUCLEOTIDE SEQUENCE [LARGE SCALE GENOMIC DNA]</scope>
</reference>
<reference key="5">
    <citation type="journal article" date="2004" name="Genome Res.">
        <title>The status, quality, and expansion of the NIH full-length cDNA project: the Mammalian Gene Collection (MGC).</title>
        <authorList>
            <consortium name="The MGC Project Team"/>
        </authorList>
    </citation>
    <scope>NUCLEOTIDE SEQUENCE [LARGE SCALE MRNA]</scope>
    <source>
        <tissue>Brain</tissue>
    </source>
</reference>
<reference key="6">
    <citation type="journal article" date="2008" name="Proc. Natl. Acad. Sci. U.S.A.">
        <title>A quantitative atlas of mitotic phosphorylation.</title>
        <authorList>
            <person name="Dephoure N."/>
            <person name="Zhou C."/>
            <person name="Villen J."/>
            <person name="Beausoleil S.A."/>
            <person name="Bakalarski C.E."/>
            <person name="Elledge S.J."/>
            <person name="Gygi S.P."/>
        </authorList>
    </citation>
    <scope>IDENTIFICATION BY MASS SPECTROMETRY [LARGE SCALE ANALYSIS]</scope>
    <source>
        <tissue>Cervix carcinoma</tissue>
    </source>
</reference>
<reference key="7">
    <citation type="journal article" date="2012" name="Mol. Cell">
        <title>Translational homeostasis via the mRNA cap-binding protein, eIF4E.</title>
        <authorList>
            <person name="Yanagiya A."/>
            <person name="Suyama E."/>
            <person name="Adachi H."/>
            <person name="Svitkin Y.V."/>
            <person name="Aza-Blanc P."/>
            <person name="Imataka H."/>
            <person name="Mikami S."/>
            <person name="Martineau Y."/>
            <person name="Ronai Z.A."/>
            <person name="Sonenberg N."/>
        </authorList>
    </citation>
    <scope>FUNCTION</scope>
    <scope>PATHWAY</scope>
    <scope>IDENTIFICATION IN A BCR (BTB-CUL3-RBX1) E3 UBIQUITIN LIGASE COMPLEX</scope>
</reference>
<reference key="8">
    <citation type="journal article" date="2016" name="Genes Dev.">
        <title>Cullin3-KLHL25 ubiquitin ligase targets ACLY for degradation to inhibit lipid synthesis and tumor progression.</title>
        <authorList>
            <person name="Zhang C."/>
            <person name="Liu J."/>
            <person name="Huang G."/>
            <person name="Zhao Y."/>
            <person name="Yue X."/>
            <person name="Wu H."/>
            <person name="Li J."/>
            <person name="Zhu J."/>
            <person name="Shen Z."/>
            <person name="Haffty B.G."/>
            <person name="Hu W."/>
            <person name="Feng Z."/>
        </authorList>
    </citation>
    <scope>FUNCTION</scope>
    <scope>PATHWAY</scope>
    <scope>IDENTIFICATION IN A BCR (BTB-CUL3-RBX1) E3 UBIQUITIN LIGASE COMPLEX</scope>
</reference>
<reference key="9">
    <citation type="journal article" date="2021" name="Elife">
        <title>ACLY ubiquitination by CUL3-KLHL25 induces the reprogramming of fatty acid metabolism to facilitate iTreg differentiation.</title>
        <authorList>
            <person name="Tian M."/>
            <person name="Hao F."/>
            <person name="Jin X."/>
            <person name="Sun X."/>
            <person name="Jiang Y."/>
            <person name="Wang Y."/>
            <person name="Li D."/>
            <person name="Chang T."/>
            <person name="Zou Y."/>
            <person name="Peng P."/>
            <person name="Xia C."/>
            <person name="Liu J."/>
            <person name="Li Y."/>
            <person name="Wang P."/>
            <person name="Feng Y."/>
            <person name="Wei M."/>
        </authorList>
    </citation>
    <scope>FUNCTION</scope>
    <scope>PATHWAY</scope>
</reference>
<evidence type="ECO:0000255" key="1">
    <source>
        <dbReference type="PROSITE-ProRule" id="PRU00037"/>
    </source>
</evidence>
<evidence type="ECO:0000269" key="2">
    <source>
    </source>
</evidence>
<evidence type="ECO:0000269" key="3">
    <source>
    </source>
</evidence>
<evidence type="ECO:0000269" key="4">
    <source>
    </source>
</evidence>
<evidence type="ECO:0000269" key="5">
    <source>
    </source>
</evidence>
<evidence type="ECO:0000303" key="6">
    <source>
    </source>
</evidence>
<evidence type="ECO:0000303" key="7">
    <source ref="1"/>
</evidence>
<evidence type="ECO:0000305" key="8"/>
<evidence type="ECO:0000312" key="9">
    <source>
        <dbReference type="HGNC" id="HGNC:25732"/>
    </source>
</evidence>
<keyword id="KW-0880">Kelch repeat</keyword>
<keyword id="KW-1267">Proteomics identification</keyword>
<keyword id="KW-1185">Reference proteome</keyword>
<keyword id="KW-0677">Repeat</keyword>
<keyword id="KW-0810">Translation regulation</keyword>
<keyword id="KW-0833">Ubl conjugation pathway</keyword>
<dbReference type="EMBL" id="AY764034">
    <property type="protein sequence ID" value="AAV51405.1"/>
    <property type="molecule type" value="mRNA"/>
</dbReference>
<dbReference type="EMBL" id="AL136796">
    <property type="protein sequence ID" value="CAB66730.1"/>
    <property type="molecule type" value="mRNA"/>
</dbReference>
<dbReference type="EMBL" id="AK092231">
    <property type="protein sequence ID" value="BAG52499.1"/>
    <property type="molecule type" value="mRNA"/>
</dbReference>
<dbReference type="EMBL" id="AK315541">
    <property type="protein sequence ID" value="BAG37919.1"/>
    <property type="molecule type" value="mRNA"/>
</dbReference>
<dbReference type="EMBL" id="AC021739">
    <property type="status" value="NOT_ANNOTATED_CDS"/>
    <property type="molecule type" value="Genomic_DNA"/>
</dbReference>
<dbReference type="EMBL" id="BC028100">
    <property type="protein sequence ID" value="AAH28100.1"/>
    <property type="molecule type" value="mRNA"/>
</dbReference>
<dbReference type="CCDS" id="CCDS10339.1"/>
<dbReference type="RefSeq" id="NP_071925.2">
    <property type="nucleotide sequence ID" value="NM_022480.3"/>
</dbReference>
<dbReference type="RefSeq" id="XP_047288893.1">
    <property type="nucleotide sequence ID" value="XM_047432937.1"/>
</dbReference>
<dbReference type="RefSeq" id="XP_047288894.1">
    <property type="nucleotide sequence ID" value="XM_047432938.1"/>
</dbReference>
<dbReference type="RefSeq" id="XP_054234590.1">
    <property type="nucleotide sequence ID" value="XM_054378615.1"/>
</dbReference>
<dbReference type="SMR" id="Q9H0H3"/>
<dbReference type="BioGRID" id="122162">
    <property type="interactions" value="18"/>
</dbReference>
<dbReference type="ComplexPortal" id="CPX-8126">
    <property type="entry name" value="CRL3 E3 ubiquitin ligase complex, KLHL25 variant"/>
</dbReference>
<dbReference type="CORUM" id="Q9H0H3"/>
<dbReference type="FunCoup" id="Q9H0H3">
    <property type="interactions" value="165"/>
</dbReference>
<dbReference type="IntAct" id="Q9H0H3">
    <property type="interactions" value="19"/>
</dbReference>
<dbReference type="MINT" id="Q9H0H3"/>
<dbReference type="STRING" id="9606.ENSP00000336800"/>
<dbReference type="iPTMnet" id="Q9H0H3"/>
<dbReference type="PhosphoSitePlus" id="Q9H0H3"/>
<dbReference type="BioMuta" id="KLHL25"/>
<dbReference type="DMDM" id="74733525"/>
<dbReference type="jPOST" id="Q9H0H3"/>
<dbReference type="MassIVE" id="Q9H0H3"/>
<dbReference type="PaxDb" id="9606-ENSP00000336800"/>
<dbReference type="PeptideAtlas" id="Q9H0H3"/>
<dbReference type="ProteomicsDB" id="80278"/>
<dbReference type="Pumba" id="Q9H0H3"/>
<dbReference type="Antibodypedia" id="15613">
    <property type="antibodies" value="241 antibodies from 29 providers"/>
</dbReference>
<dbReference type="DNASU" id="64410"/>
<dbReference type="Ensembl" id="ENST00000337975.6">
    <property type="protein sequence ID" value="ENSP00000336800.5"/>
    <property type="gene ID" value="ENSG00000183655.13"/>
</dbReference>
<dbReference type="GeneID" id="64410"/>
<dbReference type="KEGG" id="hsa:64410"/>
<dbReference type="MANE-Select" id="ENST00000337975.6">
    <property type="protein sequence ID" value="ENSP00000336800.5"/>
    <property type="RefSeq nucleotide sequence ID" value="NM_022480.4"/>
    <property type="RefSeq protein sequence ID" value="NP_071925.2"/>
</dbReference>
<dbReference type="UCSC" id="uc002bly.5">
    <property type="organism name" value="human"/>
</dbReference>
<dbReference type="AGR" id="HGNC:25732"/>
<dbReference type="CTD" id="64410"/>
<dbReference type="DisGeNET" id="64410"/>
<dbReference type="GeneCards" id="KLHL25"/>
<dbReference type="HGNC" id="HGNC:25732">
    <property type="gene designation" value="KLHL25"/>
</dbReference>
<dbReference type="HPA" id="ENSG00000183655">
    <property type="expression patterns" value="Low tissue specificity"/>
</dbReference>
<dbReference type="MIM" id="619893">
    <property type="type" value="gene"/>
</dbReference>
<dbReference type="neXtProt" id="NX_Q9H0H3"/>
<dbReference type="OpenTargets" id="ENSG00000183655"/>
<dbReference type="PharmGKB" id="PA142671577"/>
<dbReference type="VEuPathDB" id="HostDB:ENSG00000183655"/>
<dbReference type="eggNOG" id="KOG4441">
    <property type="taxonomic scope" value="Eukaryota"/>
</dbReference>
<dbReference type="GeneTree" id="ENSGT00950000182983"/>
<dbReference type="HOGENOM" id="CLU_004253_14_6_1"/>
<dbReference type="InParanoid" id="Q9H0H3"/>
<dbReference type="OMA" id="SNCLAMM"/>
<dbReference type="OrthoDB" id="6359816at2759"/>
<dbReference type="PAN-GO" id="Q9H0H3">
    <property type="GO annotations" value="3 GO annotations based on evolutionary models"/>
</dbReference>
<dbReference type="PhylomeDB" id="Q9H0H3"/>
<dbReference type="TreeFam" id="TF329218"/>
<dbReference type="PathwayCommons" id="Q9H0H3"/>
<dbReference type="Reactome" id="R-HSA-8951664">
    <property type="pathway name" value="Neddylation"/>
</dbReference>
<dbReference type="Reactome" id="R-HSA-983168">
    <property type="pathway name" value="Antigen processing: Ubiquitination &amp; Proteasome degradation"/>
</dbReference>
<dbReference type="SignaLink" id="Q9H0H3"/>
<dbReference type="SIGNOR" id="Q9H0H3"/>
<dbReference type="UniPathway" id="UPA00143"/>
<dbReference type="BioGRID-ORCS" id="64410">
    <property type="hits" value="11 hits in 1189 CRISPR screens"/>
</dbReference>
<dbReference type="ChiTaRS" id="KLHL25">
    <property type="organism name" value="human"/>
</dbReference>
<dbReference type="GeneWiki" id="KLHL25"/>
<dbReference type="GenomeRNAi" id="64410"/>
<dbReference type="Pharos" id="Q9H0H3">
    <property type="development level" value="Tbio"/>
</dbReference>
<dbReference type="PRO" id="PR:Q9H0H3"/>
<dbReference type="Proteomes" id="UP000005640">
    <property type="component" value="Chromosome 15"/>
</dbReference>
<dbReference type="RNAct" id="Q9H0H3">
    <property type="molecule type" value="protein"/>
</dbReference>
<dbReference type="Bgee" id="ENSG00000183655">
    <property type="expression patterns" value="Expressed in ventricular zone and 114 other cell types or tissues"/>
</dbReference>
<dbReference type="GO" id="GO:0031463">
    <property type="term" value="C:Cul3-RING ubiquitin ligase complex"/>
    <property type="evidence" value="ECO:0000314"/>
    <property type="project" value="UniProtKB"/>
</dbReference>
<dbReference type="GO" id="GO:0005737">
    <property type="term" value="C:cytoplasm"/>
    <property type="evidence" value="ECO:0000314"/>
    <property type="project" value="LIFEdb"/>
</dbReference>
<dbReference type="GO" id="GO:0005829">
    <property type="term" value="C:cytosol"/>
    <property type="evidence" value="ECO:0000304"/>
    <property type="project" value="Reactome"/>
</dbReference>
<dbReference type="GO" id="GO:1990756">
    <property type="term" value="F:ubiquitin-like ligase-substrate adaptor activity"/>
    <property type="evidence" value="ECO:0000314"/>
    <property type="project" value="UniProtKB"/>
</dbReference>
<dbReference type="GO" id="GO:0045717">
    <property type="term" value="P:negative regulation of fatty acid biosynthetic process"/>
    <property type="evidence" value="ECO:0000314"/>
    <property type="project" value="UniProtKB"/>
</dbReference>
<dbReference type="GO" id="GO:0032831">
    <property type="term" value="P:positive regulation of CD4-positive, CD25-positive, alpha-beta regulatory T cell differentiation"/>
    <property type="evidence" value="ECO:0000314"/>
    <property type="project" value="UniProtKB"/>
</dbReference>
<dbReference type="GO" id="GO:0046321">
    <property type="term" value="P:positive regulation of fatty acid oxidation"/>
    <property type="evidence" value="ECO:0000314"/>
    <property type="project" value="UniProt"/>
</dbReference>
<dbReference type="GO" id="GO:0016567">
    <property type="term" value="P:protein ubiquitination"/>
    <property type="evidence" value="ECO:0000314"/>
    <property type="project" value="UniProtKB"/>
</dbReference>
<dbReference type="GO" id="GO:0006446">
    <property type="term" value="P:regulation of translational initiation"/>
    <property type="evidence" value="ECO:0000314"/>
    <property type="project" value="UniProtKB"/>
</dbReference>
<dbReference type="GO" id="GO:0006511">
    <property type="term" value="P:ubiquitin-dependent protein catabolic process"/>
    <property type="evidence" value="ECO:0000314"/>
    <property type="project" value="UniProtKB"/>
</dbReference>
<dbReference type="CDD" id="cd18514">
    <property type="entry name" value="BACK_KLHL25_ENC2"/>
    <property type="match status" value="1"/>
</dbReference>
<dbReference type="CDD" id="cd18254">
    <property type="entry name" value="BTB_POZ_KLHL25"/>
    <property type="match status" value="1"/>
</dbReference>
<dbReference type="FunFam" id="3.30.710.10:FF:000023">
    <property type="entry name" value="Ectoderm-neural cortex protein 1"/>
    <property type="match status" value="1"/>
</dbReference>
<dbReference type="FunFam" id="2.120.10.80:FF:000119">
    <property type="entry name" value="Kelch-like 25"/>
    <property type="match status" value="1"/>
</dbReference>
<dbReference type="FunFam" id="1.25.40.420:FF:000001">
    <property type="entry name" value="Kelch-like family member 12"/>
    <property type="match status" value="1"/>
</dbReference>
<dbReference type="Gene3D" id="1.25.40.420">
    <property type="match status" value="1"/>
</dbReference>
<dbReference type="Gene3D" id="2.120.10.80">
    <property type="entry name" value="Kelch-type beta propeller"/>
    <property type="match status" value="2"/>
</dbReference>
<dbReference type="Gene3D" id="3.30.710.10">
    <property type="entry name" value="Potassium Channel Kv1.1, Chain A"/>
    <property type="match status" value="1"/>
</dbReference>
<dbReference type="InterPro" id="IPR011705">
    <property type="entry name" value="BACK"/>
</dbReference>
<dbReference type="InterPro" id="IPR056737">
    <property type="entry name" value="Beta-prop_ATRN-MKLN-like"/>
</dbReference>
<dbReference type="InterPro" id="IPR017096">
    <property type="entry name" value="BTB-kelch_protein"/>
</dbReference>
<dbReference type="InterPro" id="IPR000210">
    <property type="entry name" value="BTB/POZ_dom"/>
</dbReference>
<dbReference type="InterPro" id="IPR015915">
    <property type="entry name" value="Kelch-typ_b-propeller"/>
</dbReference>
<dbReference type="InterPro" id="IPR006652">
    <property type="entry name" value="Kelch_1"/>
</dbReference>
<dbReference type="InterPro" id="IPR030565">
    <property type="entry name" value="KLHL25_BTB_POZ_dom"/>
</dbReference>
<dbReference type="InterPro" id="IPR011333">
    <property type="entry name" value="SKP1/BTB/POZ_sf"/>
</dbReference>
<dbReference type="PANTHER" id="PTHR24412">
    <property type="entry name" value="KELCH PROTEIN"/>
    <property type="match status" value="1"/>
</dbReference>
<dbReference type="PANTHER" id="PTHR24412:SF487">
    <property type="entry name" value="KELCH-LIKE PROTEIN 25"/>
    <property type="match status" value="1"/>
</dbReference>
<dbReference type="Pfam" id="PF07707">
    <property type="entry name" value="BACK"/>
    <property type="match status" value="1"/>
</dbReference>
<dbReference type="Pfam" id="PF24981">
    <property type="entry name" value="Beta-prop_ATRN-LZTR1"/>
    <property type="match status" value="1"/>
</dbReference>
<dbReference type="Pfam" id="PF00651">
    <property type="entry name" value="BTB"/>
    <property type="match status" value="1"/>
</dbReference>
<dbReference type="PIRSF" id="PIRSF037037">
    <property type="entry name" value="Kelch-like_protein_gigaxonin"/>
    <property type="match status" value="1"/>
</dbReference>
<dbReference type="SMART" id="SM00875">
    <property type="entry name" value="BACK"/>
    <property type="match status" value="1"/>
</dbReference>
<dbReference type="SMART" id="SM00225">
    <property type="entry name" value="BTB"/>
    <property type="match status" value="1"/>
</dbReference>
<dbReference type="SMART" id="SM00612">
    <property type="entry name" value="Kelch"/>
    <property type="match status" value="6"/>
</dbReference>
<dbReference type="SUPFAM" id="SSF117281">
    <property type="entry name" value="Kelch motif"/>
    <property type="match status" value="1"/>
</dbReference>
<dbReference type="SUPFAM" id="SSF54695">
    <property type="entry name" value="POZ domain"/>
    <property type="match status" value="1"/>
</dbReference>
<dbReference type="PROSITE" id="PS50097">
    <property type="entry name" value="BTB"/>
    <property type="match status" value="1"/>
</dbReference>
<feature type="chain" id="PRO_0000272308" description="Kelch-like protein 25">
    <location>
        <begin position="1"/>
        <end position="589"/>
    </location>
</feature>
<feature type="domain" description="BTB" evidence="1">
    <location>
        <begin position="46"/>
        <end position="114"/>
    </location>
</feature>
<feature type="domain" description="BACK">
    <location>
        <begin position="149"/>
        <end position="250"/>
    </location>
</feature>
<feature type="repeat" description="Kelch 1">
    <location>
        <begin position="296"/>
        <end position="340"/>
    </location>
</feature>
<feature type="repeat" description="Kelch 2">
    <location>
        <begin position="341"/>
        <end position="388"/>
    </location>
</feature>
<feature type="repeat" description="Kelch 3">
    <location>
        <begin position="389"/>
        <end position="444"/>
    </location>
</feature>
<feature type="repeat" description="Kelch 4">
    <location>
        <begin position="446"/>
        <end position="492"/>
    </location>
</feature>
<feature type="repeat" description="Kelch 5">
    <location>
        <begin position="494"/>
        <end position="538"/>
    </location>
</feature>
<feature type="repeat" description="Kelch 6">
    <location>
        <begin position="539"/>
        <end position="585"/>
    </location>
</feature>
<feature type="sequence variant" id="VAR_050041" description="In dbSNP:rs35582838." evidence="2">
    <original>V</original>
    <variation>I</variation>
    <location>
        <position position="250"/>
    </location>
</feature>
<feature type="sequence variant" id="VAR_050042" description="In dbSNP:rs36031133.">
    <original>M</original>
    <variation>L</variation>
    <location>
        <position position="257"/>
    </location>
</feature>
<feature type="sequence conflict" description="In Ref. 3; BAG37919." evidence="8" ref="3">
    <original>I</original>
    <variation>T</variation>
    <location>
        <position position="320"/>
    </location>
</feature>
<gene>
    <name evidence="6 9" type="primary">KLHL25</name>
    <name evidence="7" type="synonym">ENC2</name>
</gene>
<accession>Q9H0H3</accession>
<accession>B2RDH2</accession>
<accession>B3KRT7</accession>
<name>KLH25_HUMAN</name>
<sequence length="589" mass="65923">MSVSVHETRKSRSSTGSMNVTLFHKASHPDCVLAHLNTLRKHCMFTDVTLWAGDRAFPCHRAVLAASSRYFEAMFSHGLRESRDDTVNFQDNLHPEVLELLLDFAYSSRIAINEENAESLLEAGDMLQFHDVRDAAAEFLEKNLFPSNCLGMMLLSDAHQCRRLYEFSWRMCLVHFETVRQSEDFNSLSKDTLLDLISSDELETEDERVVFEAILQWVKHDLEPRKVHLPELLRSVRLALLPSDCLQEAVSSEALLMADERTKLIMDEALRCKTRILQNDGVVTSPCARPRKAGHTLLILGGQTFMCDKIYQVDHKAKEIIPKADLPSPRKEFSASAIGCKVYVTGGRGSENGVSKDVWVYDTVHEEWSKAAPMLIARFGHGSAELENCLYVVGGHTSLAGVFPASPSVSLKQVEKYDPGANKWMMVAPLRDGVSNAAVVSAKLKLFVFGGTSIHRDMVSKVQCYDPSENRWTIKAECPQPWRYTAAAVLGSQIFIMGGDTEFTAASAYRFDCETNQWTRIGDMTAKRMSCHALASGNKLYVVGGYFGTQRCKTLDCYDPTSDTWNCITTVPYSLIPTAFVSTWKHLPA</sequence>
<organism>
    <name type="scientific">Homo sapiens</name>
    <name type="common">Human</name>
    <dbReference type="NCBI Taxonomy" id="9606"/>
    <lineage>
        <taxon>Eukaryota</taxon>
        <taxon>Metazoa</taxon>
        <taxon>Chordata</taxon>
        <taxon>Craniata</taxon>
        <taxon>Vertebrata</taxon>
        <taxon>Euteleostomi</taxon>
        <taxon>Mammalia</taxon>
        <taxon>Eutheria</taxon>
        <taxon>Euarchontoglires</taxon>
        <taxon>Primates</taxon>
        <taxon>Haplorrhini</taxon>
        <taxon>Catarrhini</taxon>
        <taxon>Hominidae</taxon>
        <taxon>Homo</taxon>
    </lineage>
</organism>
<comment type="function">
    <text evidence="3 4 5">Substrate-specific adapter of a BCR (BTB-CUL3-RBX1) E3 ubiquitin ligase complex involved in various processes, such as translation homeostasis and lipid synthesis (PubMed:22578813, PubMed:27664236, PubMed:34491895). The BCR(KLHL25) ubiquitin ligase complex acts by mediating ubiquitination of hypophosphorylated EIF4EBP1 (4E-BP1): ubiquitination and subsequent degradation of hypophosphorylated EIF4EBP1 (4E-BP1) probably serves as a homeostatic mechanism to maintain translation and prevent eIF4E inhibition when eIF4E levels are low (PubMed:22578813). The BCR(KLHL25) complex does not target EIF4EBP1 (4E-BP1) when it is hyperphosphorylated or associated with eIF4E (PubMed:22578813). The BCR(KLHL25) complex also acts as a regulator of lipid synthesis by mediating ubiquitination and degradation of ACLY, thereby inhibiting lipid synthesis (PubMed:27664236, PubMed:34491895). BCR(KLHL25)-mediated degradation of ACLY promotes fatty acid oxidation and is required for differentiation of inducible regulatory T (iTreg) cells (PubMed:34491895).</text>
</comment>
<comment type="pathway">
    <text evidence="3 4 5">Protein modification; protein ubiquitination.</text>
</comment>
<comment type="subunit">
    <text evidence="3 4">Component of the BCR(KLHL25) E3 ubiquitin ligase complex, at least composed of CUL3, KLHL25 and RBX1.</text>
</comment>
<protein>
    <recommendedName>
        <fullName evidence="8">Kelch-like protein 25</fullName>
    </recommendedName>
    <alternativeName>
        <fullName evidence="7">Ectoderm-neural cortex protein 2</fullName>
        <shortName evidence="7">ENC-2</shortName>
    </alternativeName>
</protein>
<proteinExistence type="evidence at protein level"/>